<reference key="1">
    <citation type="journal article" date="2009" name="Stand. Genomic Sci.">
        <title>Complete genome sequence of Methanoculleus marisnigri Romesser et al. 1981 type strain JR1.</title>
        <authorList>
            <person name="Anderson I.J."/>
            <person name="Sieprawska-Lupa M."/>
            <person name="Lapidus A."/>
            <person name="Nolan M."/>
            <person name="Copeland A."/>
            <person name="Glavina Del Rio T."/>
            <person name="Tice H."/>
            <person name="Dalin E."/>
            <person name="Barry K."/>
            <person name="Saunders E."/>
            <person name="Han C."/>
            <person name="Brettin T."/>
            <person name="Detter J.C."/>
            <person name="Bruce D."/>
            <person name="Mikhailova N."/>
            <person name="Pitluck S."/>
            <person name="Hauser L."/>
            <person name="Land M."/>
            <person name="Lucas S."/>
            <person name="Richardson P."/>
            <person name="Whitman W.B."/>
            <person name="Kyrpides N.C."/>
        </authorList>
    </citation>
    <scope>NUCLEOTIDE SEQUENCE [LARGE SCALE GENOMIC DNA]</scope>
    <source>
        <strain>ATCC 35101 / DSM 1498 / JR1</strain>
    </source>
</reference>
<dbReference type="EC" id="1.1.1.261" evidence="1"/>
<dbReference type="EMBL" id="CP000562">
    <property type="protein sequence ID" value="ABN57971.1"/>
    <property type="molecule type" value="Genomic_DNA"/>
</dbReference>
<dbReference type="RefSeq" id="WP_011844880.1">
    <property type="nucleotide sequence ID" value="NC_009051.1"/>
</dbReference>
<dbReference type="SMR" id="A3CX71"/>
<dbReference type="STRING" id="368407.Memar_2045"/>
<dbReference type="GeneID" id="4847602"/>
<dbReference type="KEGG" id="mem:Memar_2045"/>
<dbReference type="eggNOG" id="arCOG00982">
    <property type="taxonomic scope" value="Archaea"/>
</dbReference>
<dbReference type="HOGENOM" id="CLU_038362_0_0_2"/>
<dbReference type="OrthoDB" id="8656at2157"/>
<dbReference type="UniPathway" id="UPA00940"/>
<dbReference type="Proteomes" id="UP000002146">
    <property type="component" value="Chromosome"/>
</dbReference>
<dbReference type="GO" id="GO:0005737">
    <property type="term" value="C:cytoplasm"/>
    <property type="evidence" value="ECO:0007669"/>
    <property type="project" value="UniProtKB-SubCell"/>
</dbReference>
<dbReference type="GO" id="GO:0106357">
    <property type="term" value="F:glycerol-1-phosphate dehydrogenase (NAD+) activity"/>
    <property type="evidence" value="ECO:0007669"/>
    <property type="project" value="RHEA"/>
</dbReference>
<dbReference type="GO" id="GO:0106358">
    <property type="term" value="F:glycerol-1-phosphate dehydrogenase (NADP+) activity"/>
    <property type="evidence" value="ECO:0007669"/>
    <property type="project" value="RHEA"/>
</dbReference>
<dbReference type="GO" id="GO:0046872">
    <property type="term" value="F:metal ion binding"/>
    <property type="evidence" value="ECO:0007669"/>
    <property type="project" value="UniProtKB-KW"/>
</dbReference>
<dbReference type="GO" id="GO:0006650">
    <property type="term" value="P:glycerophospholipid metabolic process"/>
    <property type="evidence" value="ECO:0007669"/>
    <property type="project" value="UniProtKB-UniRule"/>
</dbReference>
<dbReference type="GO" id="GO:0008654">
    <property type="term" value="P:phospholipid biosynthetic process"/>
    <property type="evidence" value="ECO:0007669"/>
    <property type="project" value="UniProtKB-KW"/>
</dbReference>
<dbReference type="CDD" id="cd08173">
    <property type="entry name" value="Gro1PDH"/>
    <property type="match status" value="1"/>
</dbReference>
<dbReference type="Gene3D" id="3.40.50.1970">
    <property type="match status" value="1"/>
</dbReference>
<dbReference type="Gene3D" id="1.20.1090.10">
    <property type="entry name" value="Dehydroquinate synthase-like - alpha domain"/>
    <property type="match status" value="1"/>
</dbReference>
<dbReference type="HAMAP" id="MF_00497_A">
    <property type="entry name" value="G1P_dehydrogenase_A"/>
    <property type="match status" value="1"/>
</dbReference>
<dbReference type="InterPro" id="IPR023002">
    <property type="entry name" value="G1P_dehydrogenase_arc"/>
</dbReference>
<dbReference type="InterPro" id="IPR032837">
    <property type="entry name" value="G1PDH"/>
</dbReference>
<dbReference type="InterPro" id="IPR016205">
    <property type="entry name" value="Glycerol_DH"/>
</dbReference>
<dbReference type="NCBIfam" id="NF002022">
    <property type="entry name" value="PRK00843.1"/>
    <property type="match status" value="1"/>
</dbReference>
<dbReference type="PANTHER" id="PTHR43616">
    <property type="entry name" value="GLYCEROL DEHYDROGENASE"/>
    <property type="match status" value="1"/>
</dbReference>
<dbReference type="PANTHER" id="PTHR43616:SF5">
    <property type="entry name" value="GLYCEROL DEHYDROGENASE 1"/>
    <property type="match status" value="1"/>
</dbReference>
<dbReference type="Pfam" id="PF13685">
    <property type="entry name" value="Fe-ADH_2"/>
    <property type="match status" value="1"/>
</dbReference>
<dbReference type="PIRSF" id="PIRSF000112">
    <property type="entry name" value="Glycerol_dehydrogenase"/>
    <property type="match status" value="1"/>
</dbReference>
<dbReference type="SUPFAM" id="SSF56796">
    <property type="entry name" value="Dehydroquinate synthase-like"/>
    <property type="match status" value="1"/>
</dbReference>
<name>G1PDH_METMJ</name>
<evidence type="ECO:0000255" key="1">
    <source>
        <dbReference type="HAMAP-Rule" id="MF_00497"/>
    </source>
</evidence>
<feature type="chain" id="PRO_0000350656" description="Glycerol-1-phosphate dehydrogenase [NAD(P)+]">
    <location>
        <begin position="1"/>
        <end position="360"/>
    </location>
</feature>
<feature type="binding site" evidence="1">
    <location>
        <begin position="108"/>
        <end position="112"/>
    </location>
    <ligand>
        <name>NAD(+)</name>
        <dbReference type="ChEBI" id="CHEBI:57540"/>
    </ligand>
</feature>
<feature type="binding site" evidence="1">
    <location>
        <begin position="130"/>
        <end position="133"/>
    </location>
    <ligand>
        <name>NAD(+)</name>
        <dbReference type="ChEBI" id="CHEBI:57540"/>
    </ligand>
</feature>
<feature type="binding site" evidence="1">
    <location>
        <position position="135"/>
    </location>
    <ligand>
        <name>substrate</name>
    </ligand>
</feature>
<feature type="binding site" evidence="1">
    <location>
        <position position="139"/>
    </location>
    <ligand>
        <name>NAD(+)</name>
        <dbReference type="ChEBI" id="CHEBI:57540"/>
    </ligand>
</feature>
<feature type="binding site" evidence="1">
    <location>
        <position position="182"/>
    </location>
    <ligand>
        <name>substrate</name>
    </ligand>
</feature>
<feature type="binding site" evidence="1">
    <location>
        <position position="182"/>
    </location>
    <ligand>
        <name>Zn(2+)</name>
        <dbReference type="ChEBI" id="CHEBI:29105"/>
        <note>catalytic</note>
    </ligand>
</feature>
<feature type="binding site" evidence="1">
    <location>
        <position position="262"/>
    </location>
    <ligand>
        <name>Zn(2+)</name>
        <dbReference type="ChEBI" id="CHEBI:29105"/>
        <note>catalytic</note>
    </ligand>
</feature>
<feature type="binding site" evidence="1">
    <location>
        <position position="266"/>
    </location>
    <ligand>
        <name>substrate</name>
    </ligand>
</feature>
<feature type="binding site" evidence="1">
    <location>
        <position position="278"/>
    </location>
    <ligand>
        <name>Zn(2+)</name>
        <dbReference type="ChEBI" id="CHEBI:29105"/>
        <note>catalytic</note>
    </ligand>
</feature>
<keyword id="KW-0963">Cytoplasm</keyword>
<keyword id="KW-0444">Lipid biosynthesis</keyword>
<keyword id="KW-0443">Lipid metabolism</keyword>
<keyword id="KW-0479">Metal-binding</keyword>
<keyword id="KW-0520">NAD</keyword>
<keyword id="KW-0521">NADP</keyword>
<keyword id="KW-0560">Oxidoreductase</keyword>
<keyword id="KW-0594">Phospholipid biosynthesis</keyword>
<keyword id="KW-1208">Phospholipid metabolism</keyword>
<keyword id="KW-0862">Zinc</keyword>
<sequence length="360" mass="38029">MSADRINLLRTKVFDKSKWMQLPRDVVIGHDVIEQIPAVCEDLALGDSVLIVSGGQTRDIAGKRVEALLAGSYDVVTFAANDGNPFETIRKAEEAAATAGFVIGVGGGRVIDTAKIASYNTDRHFISVPTAASHDGIASSRASVPTADGNVSLAAEPPIAVVADTAVIASAPHRLLASGCADIIANYTAILDWELSHRLRGEPLSEYALTLSRMTAEILFKNADLIKPHSEESAWLVTKALVSSGVAMSIAGSSRPGSGGEHKFSHALEKLAPGKGLHGEKCGIGAIITMYLHGGDWEGIRDSLKKIGAPTTPAAIGVDDETAVAALLAARTIRPERFTILDMGLTEESARDLVKMLYRE</sequence>
<protein>
    <recommendedName>
        <fullName evidence="1">Glycerol-1-phosphate dehydrogenase [NAD(P)+]</fullName>
        <shortName evidence="1">G1P dehydrogenase</shortName>
        <shortName evidence="1">G1PDH</shortName>
        <ecNumber evidence="1">1.1.1.261</ecNumber>
    </recommendedName>
    <alternativeName>
        <fullName evidence="1">Enantiomeric glycerophosphate synthase</fullName>
    </alternativeName>
    <alternativeName>
        <fullName evidence="1">sn-glycerol-1-phosphate dehydrogenase</fullName>
    </alternativeName>
</protein>
<gene>
    <name evidence="1" type="primary">egsA</name>
    <name type="ordered locus">Memar_2045</name>
</gene>
<accession>A3CX71</accession>
<proteinExistence type="inferred from homology"/>
<organism>
    <name type="scientific">Methanoculleus marisnigri (strain ATCC 35101 / DSM 1498 / JR1)</name>
    <dbReference type="NCBI Taxonomy" id="368407"/>
    <lineage>
        <taxon>Archaea</taxon>
        <taxon>Methanobacteriati</taxon>
        <taxon>Methanobacteriota</taxon>
        <taxon>Stenosarchaea group</taxon>
        <taxon>Methanomicrobia</taxon>
        <taxon>Methanomicrobiales</taxon>
        <taxon>Methanomicrobiaceae</taxon>
        <taxon>Methanoculleus</taxon>
    </lineage>
</organism>
<comment type="function">
    <text evidence="1">Catalyzes the NAD(P)H-dependent reduction of dihydroxyacetonephosphate (DHAP or glycerone phosphate) to glycerol 1-phosphate (G1P). The G1P thus generated is used as the glycerophosphate backbone of phospholipids in the cellular membranes of Archaea.</text>
</comment>
<comment type="catalytic activity">
    <reaction evidence="1">
        <text>sn-glycerol 1-phosphate + NAD(+) = dihydroxyacetone phosphate + NADH + H(+)</text>
        <dbReference type="Rhea" id="RHEA:21412"/>
        <dbReference type="ChEBI" id="CHEBI:15378"/>
        <dbReference type="ChEBI" id="CHEBI:57540"/>
        <dbReference type="ChEBI" id="CHEBI:57642"/>
        <dbReference type="ChEBI" id="CHEBI:57685"/>
        <dbReference type="ChEBI" id="CHEBI:57945"/>
        <dbReference type="EC" id="1.1.1.261"/>
    </reaction>
</comment>
<comment type="catalytic activity">
    <reaction evidence="1">
        <text>sn-glycerol 1-phosphate + NADP(+) = dihydroxyacetone phosphate + NADPH + H(+)</text>
        <dbReference type="Rhea" id="RHEA:21416"/>
        <dbReference type="ChEBI" id="CHEBI:15378"/>
        <dbReference type="ChEBI" id="CHEBI:57642"/>
        <dbReference type="ChEBI" id="CHEBI:57685"/>
        <dbReference type="ChEBI" id="CHEBI:57783"/>
        <dbReference type="ChEBI" id="CHEBI:58349"/>
        <dbReference type="EC" id="1.1.1.261"/>
    </reaction>
</comment>
<comment type="cofactor">
    <cofactor evidence="1">
        <name>Zn(2+)</name>
        <dbReference type="ChEBI" id="CHEBI:29105"/>
    </cofactor>
    <text evidence="1">Binds 1 zinc ion per subunit.</text>
</comment>
<comment type="pathway">
    <text evidence="1">Membrane lipid metabolism; glycerophospholipid metabolism.</text>
</comment>
<comment type="subcellular location">
    <subcellularLocation>
        <location evidence="1">Cytoplasm</location>
    </subcellularLocation>
</comment>
<comment type="similarity">
    <text evidence="1">Belongs to the glycerol-1-phosphate dehydrogenase family.</text>
</comment>